<accession>A5GSI7</accession>
<protein>
    <recommendedName>
        <fullName evidence="1">Homoserine kinase</fullName>
        <shortName evidence="1">HK</shortName>
        <shortName evidence="1">HSK</shortName>
        <ecNumber evidence="1">2.7.1.39</ecNumber>
    </recommendedName>
</protein>
<sequence>MGKPEIGTTVVVDVPATTANLGPGFDCLGAALDLNNQFQLKVLEGGAERFELIIESKEGSHLRGGPDNLVYRAAQRVWREVGMQPIALEARVQLAVPPARGMGSSATAIVAGLMGANALAGEALGKEKLLELAIDIEGHPDNVVPSLLGGLCLTAQAASRRWRVVRCEWHENVQAVVAIPSIRLSTADARRAMPKQIVVPDAVSNLGSLTLLLQGLRSGNGDLITDGMHDRLHEPYRWPLIQGGSAVRKAAMDAGAWGCVISGAGPSLLALCPPDKGRAVAEAMEKSWEQEGVQTRALPLKLQSGGSRWRPKPS</sequence>
<reference key="1">
    <citation type="submission" date="2006-05" db="EMBL/GenBank/DDBJ databases">
        <authorList>
            <consortium name="Genoscope"/>
        </authorList>
    </citation>
    <scope>NUCLEOTIDE SEQUENCE [LARGE SCALE GENOMIC DNA]</scope>
    <source>
        <strain>RCC307</strain>
    </source>
</reference>
<feature type="chain" id="PRO_1000049185" description="Homoserine kinase">
    <location>
        <begin position="1"/>
        <end position="314"/>
    </location>
</feature>
<feature type="binding site" evidence="1">
    <location>
        <begin position="97"/>
        <end position="107"/>
    </location>
    <ligand>
        <name>ATP</name>
        <dbReference type="ChEBI" id="CHEBI:30616"/>
    </ligand>
</feature>
<keyword id="KW-0028">Amino-acid biosynthesis</keyword>
<keyword id="KW-0067">ATP-binding</keyword>
<keyword id="KW-0963">Cytoplasm</keyword>
<keyword id="KW-0418">Kinase</keyword>
<keyword id="KW-0547">Nucleotide-binding</keyword>
<keyword id="KW-1185">Reference proteome</keyword>
<keyword id="KW-0791">Threonine biosynthesis</keyword>
<keyword id="KW-0808">Transferase</keyword>
<organism>
    <name type="scientific">Synechococcus sp. (strain RCC307)</name>
    <dbReference type="NCBI Taxonomy" id="316278"/>
    <lineage>
        <taxon>Bacteria</taxon>
        <taxon>Bacillati</taxon>
        <taxon>Cyanobacteriota</taxon>
        <taxon>Cyanophyceae</taxon>
        <taxon>Synechococcales</taxon>
        <taxon>Synechococcaceae</taxon>
        <taxon>Synechococcus</taxon>
    </lineage>
</organism>
<gene>
    <name evidence="1" type="primary">thrB</name>
    <name type="ordered locus">SynRCC307_0943</name>
</gene>
<evidence type="ECO:0000255" key="1">
    <source>
        <dbReference type="HAMAP-Rule" id="MF_00384"/>
    </source>
</evidence>
<comment type="function">
    <text evidence="1">Catalyzes the ATP-dependent phosphorylation of L-homoserine to L-homoserine phosphate.</text>
</comment>
<comment type="catalytic activity">
    <reaction evidence="1">
        <text>L-homoserine + ATP = O-phospho-L-homoserine + ADP + H(+)</text>
        <dbReference type="Rhea" id="RHEA:13985"/>
        <dbReference type="ChEBI" id="CHEBI:15378"/>
        <dbReference type="ChEBI" id="CHEBI:30616"/>
        <dbReference type="ChEBI" id="CHEBI:57476"/>
        <dbReference type="ChEBI" id="CHEBI:57590"/>
        <dbReference type="ChEBI" id="CHEBI:456216"/>
        <dbReference type="EC" id="2.7.1.39"/>
    </reaction>
</comment>
<comment type="pathway">
    <text evidence="1">Amino-acid biosynthesis; L-threonine biosynthesis; L-threonine from L-aspartate: step 4/5.</text>
</comment>
<comment type="subcellular location">
    <subcellularLocation>
        <location evidence="1">Cytoplasm</location>
    </subcellularLocation>
</comment>
<comment type="similarity">
    <text evidence="1">Belongs to the GHMP kinase family. Homoserine kinase subfamily.</text>
</comment>
<proteinExistence type="inferred from homology"/>
<name>KHSE_SYNR3</name>
<dbReference type="EC" id="2.7.1.39" evidence="1"/>
<dbReference type="EMBL" id="CT978603">
    <property type="protein sequence ID" value="CAK27846.1"/>
    <property type="molecule type" value="Genomic_DNA"/>
</dbReference>
<dbReference type="SMR" id="A5GSI7"/>
<dbReference type="STRING" id="316278.SynRCC307_0943"/>
<dbReference type="KEGG" id="syr:SynRCC307_0943"/>
<dbReference type="eggNOG" id="COG0083">
    <property type="taxonomic scope" value="Bacteria"/>
</dbReference>
<dbReference type="HOGENOM" id="CLU_041243_0_2_3"/>
<dbReference type="OrthoDB" id="9769912at2"/>
<dbReference type="UniPathway" id="UPA00050">
    <property type="reaction ID" value="UER00064"/>
</dbReference>
<dbReference type="Proteomes" id="UP000001115">
    <property type="component" value="Chromosome"/>
</dbReference>
<dbReference type="GO" id="GO:0005737">
    <property type="term" value="C:cytoplasm"/>
    <property type="evidence" value="ECO:0007669"/>
    <property type="project" value="UniProtKB-SubCell"/>
</dbReference>
<dbReference type="GO" id="GO:0005524">
    <property type="term" value="F:ATP binding"/>
    <property type="evidence" value="ECO:0007669"/>
    <property type="project" value="UniProtKB-UniRule"/>
</dbReference>
<dbReference type="GO" id="GO:0004413">
    <property type="term" value="F:homoserine kinase activity"/>
    <property type="evidence" value="ECO:0007669"/>
    <property type="project" value="UniProtKB-UniRule"/>
</dbReference>
<dbReference type="GO" id="GO:0009088">
    <property type="term" value="P:threonine biosynthetic process"/>
    <property type="evidence" value="ECO:0007669"/>
    <property type="project" value="UniProtKB-UniRule"/>
</dbReference>
<dbReference type="Gene3D" id="3.30.230.10">
    <property type="match status" value="1"/>
</dbReference>
<dbReference type="Gene3D" id="3.30.70.890">
    <property type="entry name" value="GHMP kinase, C-terminal domain"/>
    <property type="match status" value="1"/>
</dbReference>
<dbReference type="HAMAP" id="MF_00384">
    <property type="entry name" value="Homoser_kinase"/>
    <property type="match status" value="1"/>
</dbReference>
<dbReference type="InterPro" id="IPR013750">
    <property type="entry name" value="GHMP_kinase_C_dom"/>
</dbReference>
<dbReference type="InterPro" id="IPR036554">
    <property type="entry name" value="GHMP_kinase_C_sf"/>
</dbReference>
<dbReference type="InterPro" id="IPR006204">
    <property type="entry name" value="GHMP_kinase_N_dom"/>
</dbReference>
<dbReference type="InterPro" id="IPR006203">
    <property type="entry name" value="GHMP_knse_ATP-bd_CS"/>
</dbReference>
<dbReference type="InterPro" id="IPR000870">
    <property type="entry name" value="Homoserine_kinase"/>
</dbReference>
<dbReference type="InterPro" id="IPR020568">
    <property type="entry name" value="Ribosomal_Su5_D2-typ_SF"/>
</dbReference>
<dbReference type="InterPro" id="IPR014721">
    <property type="entry name" value="Ribsml_uS5_D2-typ_fold_subgr"/>
</dbReference>
<dbReference type="NCBIfam" id="NF002288">
    <property type="entry name" value="PRK01212.1-4"/>
    <property type="match status" value="1"/>
</dbReference>
<dbReference type="NCBIfam" id="TIGR00191">
    <property type="entry name" value="thrB"/>
    <property type="match status" value="1"/>
</dbReference>
<dbReference type="PANTHER" id="PTHR20861:SF1">
    <property type="entry name" value="HOMOSERINE KINASE"/>
    <property type="match status" value="1"/>
</dbReference>
<dbReference type="PANTHER" id="PTHR20861">
    <property type="entry name" value="HOMOSERINE/4-DIPHOSPHOCYTIDYL-2-C-METHYL-D-ERYTHRITOL KINASE"/>
    <property type="match status" value="1"/>
</dbReference>
<dbReference type="Pfam" id="PF08544">
    <property type="entry name" value="GHMP_kinases_C"/>
    <property type="match status" value="1"/>
</dbReference>
<dbReference type="Pfam" id="PF00288">
    <property type="entry name" value="GHMP_kinases_N"/>
    <property type="match status" value="1"/>
</dbReference>
<dbReference type="PIRSF" id="PIRSF000676">
    <property type="entry name" value="Homoser_kin"/>
    <property type="match status" value="1"/>
</dbReference>
<dbReference type="PRINTS" id="PR00958">
    <property type="entry name" value="HOMSERKINASE"/>
</dbReference>
<dbReference type="SUPFAM" id="SSF55060">
    <property type="entry name" value="GHMP Kinase, C-terminal domain"/>
    <property type="match status" value="1"/>
</dbReference>
<dbReference type="SUPFAM" id="SSF54211">
    <property type="entry name" value="Ribosomal protein S5 domain 2-like"/>
    <property type="match status" value="1"/>
</dbReference>
<dbReference type="PROSITE" id="PS00627">
    <property type="entry name" value="GHMP_KINASES_ATP"/>
    <property type="match status" value="1"/>
</dbReference>